<evidence type="ECO:0000250" key="1">
    <source>
        <dbReference type="UniProtKB" id="Q1W6C3"/>
    </source>
</evidence>
<evidence type="ECO:0000250" key="2">
    <source>
        <dbReference type="UniProtKB" id="Q922G7"/>
    </source>
</evidence>
<evidence type="ECO:0000255" key="3"/>
<evidence type="ECO:0000305" key="4"/>
<reference key="1">
    <citation type="journal article" date="2004" name="Genome Res.">
        <title>The status, quality, and expansion of the NIH full-length cDNA project: the Mammalian Gene Collection (MGC).</title>
        <authorList>
            <consortium name="The MGC Project Team"/>
        </authorList>
    </citation>
    <scope>NUCLEOTIDE SEQUENCE [LARGE SCALE MRNA]</scope>
    <source>
        <tissue>Testis</tissue>
    </source>
</reference>
<accession>Q6AYM2</accession>
<comment type="function">
    <text evidence="2">Microtubule inner protein (MIP) part of the dynein-decorated doublet microtubules (DMTs) in cilia and flagellar axoneme. Plays a key role in the assembly or attachment of the inner dynein arm to microtubules in sperm flagella and tracheal cilia. Forms filamentous polymers in the walls of ciliary and flagellar microtubules.</text>
</comment>
<comment type="subunit">
    <text evidence="2">Microtubule inner protein component of sperm flagellar doublet microtubules (By similarity). May interact with CCDC172 (By similarity).</text>
</comment>
<comment type="subcellular location">
    <subcellularLocation>
        <location evidence="2">Cytoplasm</location>
        <location evidence="2">Cytoskeleton</location>
        <location evidence="2">Cilium axoneme</location>
    </subcellularLocation>
    <subcellularLocation>
        <location evidence="2">Cytoplasm</location>
        <location evidence="2">Cytoskeleton</location>
        <location evidence="2">Flagellum axoneme</location>
    </subcellularLocation>
    <subcellularLocation>
        <location evidence="2">Cytoplasm</location>
        <location evidence="2">Cytoskeleton</location>
        <location evidence="2">Microtubule organizing center</location>
    </subcellularLocation>
    <text evidence="2">Colocalized with CCDC172 at the perinuclear region.</text>
</comment>
<comment type="PTM">
    <text evidence="1">Tyrosine phosphorylated.</text>
</comment>
<comment type="PTM">
    <text evidence="2">Ubiquitinated, leading to its degradation. Deubiquitinated by USP16, promoting its stability.</text>
</comment>
<comment type="similarity">
    <text evidence="4">Belongs to the tektin family.</text>
</comment>
<protein>
    <recommendedName>
        <fullName>Tektin-2</fullName>
    </recommendedName>
    <alternativeName>
        <fullName>Tektin-t</fullName>
    </alternativeName>
    <alternativeName>
        <fullName>Testicular tektin</fullName>
    </alternativeName>
</protein>
<dbReference type="EMBL" id="BC078990">
    <property type="protein sequence ID" value="AAH78990.1"/>
    <property type="molecule type" value="mRNA"/>
</dbReference>
<dbReference type="RefSeq" id="NP_001011977.1">
    <property type="nucleotide sequence ID" value="NM_001011977.1"/>
</dbReference>
<dbReference type="RefSeq" id="XP_006238922.1">
    <property type="nucleotide sequence ID" value="XM_006238860.1"/>
</dbReference>
<dbReference type="RefSeq" id="XP_006238923.1">
    <property type="nucleotide sequence ID" value="XM_006238861.3"/>
</dbReference>
<dbReference type="SMR" id="Q6AYM2"/>
<dbReference type="BioGRID" id="255921">
    <property type="interactions" value="1"/>
</dbReference>
<dbReference type="FunCoup" id="Q6AYM2">
    <property type="interactions" value="128"/>
</dbReference>
<dbReference type="STRING" id="10116.ENSRNOP00000014721"/>
<dbReference type="PhosphoSitePlus" id="Q6AYM2"/>
<dbReference type="PaxDb" id="10116-ENSRNOP00000014721"/>
<dbReference type="Ensembl" id="ENSRNOT00000014721.5">
    <property type="protein sequence ID" value="ENSRNOP00000014721.3"/>
    <property type="gene ID" value="ENSRNOG00000011033.5"/>
</dbReference>
<dbReference type="GeneID" id="298532"/>
<dbReference type="KEGG" id="rno:298532"/>
<dbReference type="UCSC" id="RGD:1311065">
    <property type="organism name" value="rat"/>
</dbReference>
<dbReference type="AGR" id="RGD:1311065"/>
<dbReference type="CTD" id="27285"/>
<dbReference type="RGD" id="1311065">
    <property type="gene designation" value="Tekt2"/>
</dbReference>
<dbReference type="eggNOG" id="KOG2685">
    <property type="taxonomic scope" value="Eukaryota"/>
</dbReference>
<dbReference type="GeneTree" id="ENSGT00950000182894"/>
<dbReference type="HOGENOM" id="CLU_033588_0_0_1"/>
<dbReference type="InParanoid" id="Q6AYM2"/>
<dbReference type="OMA" id="FDHRGKM"/>
<dbReference type="OrthoDB" id="440745at2759"/>
<dbReference type="PhylomeDB" id="Q6AYM2"/>
<dbReference type="TreeFam" id="TF320754"/>
<dbReference type="PRO" id="PR:Q6AYM2"/>
<dbReference type="Proteomes" id="UP000002494">
    <property type="component" value="Chromosome 5"/>
</dbReference>
<dbReference type="Bgee" id="ENSRNOG00000011033">
    <property type="expression patterns" value="Expressed in testis and 7 other cell types or tissues"/>
</dbReference>
<dbReference type="GO" id="GO:0160111">
    <property type="term" value="C:axonemal A tubule inner sheath"/>
    <property type="evidence" value="ECO:0000250"/>
    <property type="project" value="UniProtKB"/>
</dbReference>
<dbReference type="GO" id="GO:0005879">
    <property type="term" value="C:axonemal microtubule"/>
    <property type="evidence" value="ECO:0000250"/>
    <property type="project" value="UniProtKB"/>
</dbReference>
<dbReference type="GO" id="GO:0015630">
    <property type="term" value="C:microtubule cytoskeleton"/>
    <property type="evidence" value="ECO:0000318"/>
    <property type="project" value="GO_Central"/>
</dbReference>
<dbReference type="GO" id="GO:0005815">
    <property type="term" value="C:microtubule organizing center"/>
    <property type="evidence" value="ECO:0000250"/>
    <property type="project" value="UniProtKB"/>
</dbReference>
<dbReference type="GO" id="GO:0036126">
    <property type="term" value="C:sperm flagellum"/>
    <property type="evidence" value="ECO:0000250"/>
    <property type="project" value="UniProtKB"/>
</dbReference>
<dbReference type="GO" id="GO:0060271">
    <property type="term" value="P:cilium assembly"/>
    <property type="evidence" value="ECO:0000318"/>
    <property type="project" value="GO_Central"/>
</dbReference>
<dbReference type="GO" id="GO:0060294">
    <property type="term" value="P:cilium movement involved in cell motility"/>
    <property type="evidence" value="ECO:0000318"/>
    <property type="project" value="GO_Central"/>
</dbReference>
<dbReference type="GO" id="GO:0030317">
    <property type="term" value="P:flagellated sperm motility"/>
    <property type="evidence" value="ECO:0000250"/>
    <property type="project" value="UniProtKB"/>
</dbReference>
<dbReference type="GO" id="GO:0036159">
    <property type="term" value="P:inner dynein arm assembly"/>
    <property type="evidence" value="ECO:0000266"/>
    <property type="project" value="RGD"/>
</dbReference>
<dbReference type="InterPro" id="IPR048256">
    <property type="entry name" value="Tektin-like"/>
</dbReference>
<dbReference type="InterPro" id="IPR000435">
    <property type="entry name" value="Tektins"/>
</dbReference>
<dbReference type="PANTHER" id="PTHR19960">
    <property type="entry name" value="TEKTIN"/>
    <property type="match status" value="1"/>
</dbReference>
<dbReference type="PANTHER" id="PTHR19960:SF29">
    <property type="entry name" value="TEKTIN-2"/>
    <property type="match status" value="1"/>
</dbReference>
<dbReference type="Pfam" id="PF03148">
    <property type="entry name" value="Tektin"/>
    <property type="match status" value="1"/>
</dbReference>
<dbReference type="PRINTS" id="PR00511">
    <property type="entry name" value="TEKTIN"/>
</dbReference>
<gene>
    <name type="primary">Tekt2</name>
</gene>
<organism>
    <name type="scientific">Rattus norvegicus</name>
    <name type="common">Rat</name>
    <dbReference type="NCBI Taxonomy" id="10116"/>
    <lineage>
        <taxon>Eukaryota</taxon>
        <taxon>Metazoa</taxon>
        <taxon>Chordata</taxon>
        <taxon>Craniata</taxon>
        <taxon>Vertebrata</taxon>
        <taxon>Euteleostomi</taxon>
        <taxon>Mammalia</taxon>
        <taxon>Eutheria</taxon>
        <taxon>Euarchontoglires</taxon>
        <taxon>Glires</taxon>
        <taxon>Rodentia</taxon>
        <taxon>Myomorpha</taxon>
        <taxon>Muroidea</taxon>
        <taxon>Muridae</taxon>
        <taxon>Murinae</taxon>
        <taxon>Rattus</taxon>
    </lineage>
</organism>
<proteinExistence type="evidence at transcript level"/>
<sequence length="430" mass="50296">MATLSLKPSQRYRLSDWLTNSYLLSTNAERQRDASHQIRQEARILRNETNNQTVWDEHDNRTRLAERIDTVNRWKEMLDKCLTDLDAEIDSLTQAKESVEQSLQAKNLPLDVAIECLTLRESRRDIDVVKDPVEEELMKEVEVIEATKKVLQEKISQAFQHLCLLQEIRQQLNSDHRDKMETLEIDRGCLSLNLTAPNLSLKVNPTRVPKDSTTLQEWDDFTRFNKNRADTEMKASIELRETIALAIAQTNNELEAQRVATEFTFRKRLREMESLYSELKWQEKNTLEEIAELQADIRRLEEDLRRKMMNLKLAHTRLESRTYRPNVELCRDQTQYGLIDEVHQLEATISIMKQKLAQTQDALDALFKHLARIQADIACKTNTMLLDTKCMDIRRKLTVPAEKFVPQVDTFTRTTNRTLSPLKTCQLELN</sequence>
<name>TEKT2_RAT</name>
<feature type="chain" id="PRO_0000184567" description="Tektin-2">
    <location>
        <begin position="1"/>
        <end position="430"/>
    </location>
</feature>
<feature type="coiled-coil region" evidence="3">
    <location>
        <begin position="75"/>
        <end position="162"/>
    </location>
</feature>
<feature type="coiled-coil region" evidence="3">
    <location>
        <begin position="226"/>
        <end position="380"/>
    </location>
</feature>
<keyword id="KW-0966">Cell projection</keyword>
<keyword id="KW-0969">Cilium</keyword>
<keyword id="KW-0175">Coiled coil</keyword>
<keyword id="KW-0963">Cytoplasm</keyword>
<keyword id="KW-0206">Cytoskeleton</keyword>
<keyword id="KW-0282">Flagellum</keyword>
<keyword id="KW-0493">Microtubule</keyword>
<keyword id="KW-0597">Phosphoprotein</keyword>
<keyword id="KW-1185">Reference proteome</keyword>
<keyword id="KW-0832">Ubl conjugation</keyword>